<name>AOTC_XYLFT</name>
<organism>
    <name type="scientific">Xylella fastidiosa (strain Temecula1 / ATCC 700964)</name>
    <dbReference type="NCBI Taxonomy" id="183190"/>
    <lineage>
        <taxon>Bacteria</taxon>
        <taxon>Pseudomonadati</taxon>
        <taxon>Pseudomonadota</taxon>
        <taxon>Gammaproteobacteria</taxon>
        <taxon>Lysobacterales</taxon>
        <taxon>Lysobacteraceae</taxon>
        <taxon>Xylella</taxon>
    </lineage>
</organism>
<proteinExistence type="inferred from homology"/>
<feature type="chain" id="PRO_0000113270" description="N-acetylornithine carbamoyltransferase">
    <location>
        <begin position="1"/>
        <end position="336"/>
    </location>
</feature>
<feature type="binding site" description="in other chain" evidence="1">
    <location>
        <begin position="49"/>
        <end position="52"/>
    </location>
    <ligand>
        <name>carbamoyl phosphate</name>
        <dbReference type="ChEBI" id="CHEBI:58228"/>
        <note>ligand shared between two neighboring subunits</note>
    </ligand>
</feature>
<feature type="binding site" evidence="1">
    <location>
        <position position="77"/>
    </location>
    <ligand>
        <name>carbamoyl phosphate</name>
        <dbReference type="ChEBI" id="CHEBI:58228"/>
        <note>ligand shared between two neighboring subunits</note>
    </ligand>
</feature>
<feature type="binding site" description="in other chain" evidence="1">
    <location>
        <position position="112"/>
    </location>
    <ligand>
        <name>carbamoyl phosphate</name>
        <dbReference type="ChEBI" id="CHEBI:58228"/>
        <note>ligand shared between two neighboring subunits</note>
    </ligand>
</feature>
<feature type="binding site" evidence="1">
    <location>
        <position position="144"/>
    </location>
    <ligand>
        <name>N(2)-acetyl-L-ornithine</name>
        <dbReference type="ChEBI" id="CHEBI:57805"/>
    </ligand>
</feature>
<feature type="binding site" description="in other chain" evidence="1">
    <location>
        <begin position="148"/>
        <end position="151"/>
    </location>
    <ligand>
        <name>carbamoyl phosphate</name>
        <dbReference type="ChEBI" id="CHEBI:58228"/>
        <note>ligand shared between two neighboring subunits</note>
    </ligand>
</feature>
<feature type="binding site" evidence="1">
    <location>
        <position position="252"/>
    </location>
    <ligand>
        <name>N(2)-acetyl-L-ornithine</name>
        <dbReference type="ChEBI" id="CHEBI:57805"/>
    </ligand>
</feature>
<feature type="binding site" description="in other chain" evidence="1">
    <location>
        <begin position="294"/>
        <end position="295"/>
    </location>
    <ligand>
        <name>carbamoyl phosphate</name>
        <dbReference type="ChEBI" id="CHEBI:58228"/>
        <note>ligand shared between two neighboring subunits</note>
    </ligand>
</feature>
<feature type="binding site" evidence="1">
    <location>
        <position position="295"/>
    </location>
    <ligand>
        <name>N(2)-acetyl-L-ornithine</name>
        <dbReference type="ChEBI" id="CHEBI:57805"/>
    </ligand>
</feature>
<feature type="binding site" description="in other chain" evidence="1">
    <location>
        <position position="322"/>
    </location>
    <ligand>
        <name>carbamoyl phosphate</name>
        <dbReference type="ChEBI" id="CHEBI:58228"/>
        <note>ligand shared between two neighboring subunits</note>
    </ligand>
</feature>
<feature type="site" description="Key residue in conferring substrate specificity for N-acetyl-L-ornithine versus N-succinyl-L-ornithine" evidence="1">
    <location>
        <position position="92"/>
    </location>
</feature>
<feature type="modified residue" description="N6-carboxylysine" evidence="1">
    <location>
        <position position="302"/>
    </location>
</feature>
<gene>
    <name evidence="2" type="primary">argF'</name>
    <name type="ordered locus">PD_0290</name>
</gene>
<keyword id="KW-0028">Amino-acid biosynthesis</keyword>
<keyword id="KW-0055">Arginine biosynthesis</keyword>
<keyword id="KW-0963">Cytoplasm</keyword>
<keyword id="KW-1185">Reference proteome</keyword>
<keyword id="KW-0808">Transferase</keyword>
<protein>
    <recommendedName>
        <fullName evidence="1">N-acetylornithine carbamoyltransferase</fullName>
        <ecNumber evidence="1">2.1.3.9</ecNumber>
    </recommendedName>
    <alternativeName>
        <fullName evidence="2">N-acetyl-L-ornithine transcarbamylase</fullName>
        <shortName evidence="2">AOTCase</shortName>
        <shortName evidence="2">Acetylornithine transcarbamylase</shortName>
    </alternativeName>
</protein>
<dbReference type="EC" id="2.1.3.9" evidence="1"/>
<dbReference type="EMBL" id="AE009442">
    <property type="protein sequence ID" value="AAO28175.1"/>
    <property type="molecule type" value="Genomic_DNA"/>
</dbReference>
<dbReference type="RefSeq" id="WP_004087894.1">
    <property type="nucleotide sequence ID" value="NC_004556.1"/>
</dbReference>
<dbReference type="SMR" id="Q87EL4"/>
<dbReference type="KEGG" id="xft:PD_0290"/>
<dbReference type="HOGENOM" id="CLU_043846_3_3_6"/>
<dbReference type="UniPathway" id="UPA00068"/>
<dbReference type="Proteomes" id="UP000002516">
    <property type="component" value="Chromosome"/>
</dbReference>
<dbReference type="GO" id="GO:0005737">
    <property type="term" value="C:cytoplasm"/>
    <property type="evidence" value="ECO:0007669"/>
    <property type="project" value="UniProtKB-SubCell"/>
</dbReference>
<dbReference type="GO" id="GO:0016597">
    <property type="term" value="F:amino acid binding"/>
    <property type="evidence" value="ECO:0007669"/>
    <property type="project" value="InterPro"/>
</dbReference>
<dbReference type="GO" id="GO:0043857">
    <property type="term" value="F:N-acetylornithine carbamoyltransferase activity"/>
    <property type="evidence" value="ECO:0007669"/>
    <property type="project" value="UniProtKB-UniRule"/>
</dbReference>
<dbReference type="GO" id="GO:0004585">
    <property type="term" value="F:ornithine carbamoyltransferase activity"/>
    <property type="evidence" value="ECO:0007669"/>
    <property type="project" value="TreeGrafter"/>
</dbReference>
<dbReference type="GO" id="GO:0042450">
    <property type="term" value="P:arginine biosynthetic process via ornithine"/>
    <property type="evidence" value="ECO:0007669"/>
    <property type="project" value="InterPro"/>
</dbReference>
<dbReference type="GO" id="GO:0019240">
    <property type="term" value="P:citrulline biosynthetic process"/>
    <property type="evidence" value="ECO:0007669"/>
    <property type="project" value="TreeGrafter"/>
</dbReference>
<dbReference type="GO" id="GO:0006526">
    <property type="term" value="P:L-arginine biosynthetic process"/>
    <property type="evidence" value="ECO:0007669"/>
    <property type="project" value="UniProtKB-UniRule"/>
</dbReference>
<dbReference type="Gene3D" id="3.40.50.1370">
    <property type="entry name" value="Aspartate/ornithine carbamoyltransferase"/>
    <property type="match status" value="2"/>
</dbReference>
<dbReference type="HAMAP" id="MF_02234">
    <property type="entry name" value="AOTCase"/>
    <property type="match status" value="1"/>
</dbReference>
<dbReference type="InterPro" id="IPR043695">
    <property type="entry name" value="ArgF"/>
</dbReference>
<dbReference type="InterPro" id="IPR006132">
    <property type="entry name" value="Asp/Orn_carbamoyltranf_P-bd"/>
</dbReference>
<dbReference type="InterPro" id="IPR006130">
    <property type="entry name" value="Asp/Orn_carbamoylTrfase"/>
</dbReference>
<dbReference type="InterPro" id="IPR036901">
    <property type="entry name" value="Asp/Orn_carbamoylTrfase_sf"/>
</dbReference>
<dbReference type="InterPro" id="IPR006131">
    <property type="entry name" value="Asp_carbamoyltransf_Asp/Orn-bd"/>
</dbReference>
<dbReference type="NCBIfam" id="NF003384">
    <property type="entry name" value="PRK04523.1"/>
    <property type="match status" value="1"/>
</dbReference>
<dbReference type="PANTHER" id="PTHR45753">
    <property type="entry name" value="ORNITHINE CARBAMOYLTRANSFERASE, MITOCHONDRIAL"/>
    <property type="match status" value="1"/>
</dbReference>
<dbReference type="PANTHER" id="PTHR45753:SF3">
    <property type="entry name" value="ORNITHINE TRANSCARBAMYLASE, MITOCHONDRIAL"/>
    <property type="match status" value="1"/>
</dbReference>
<dbReference type="Pfam" id="PF00185">
    <property type="entry name" value="OTCace"/>
    <property type="match status" value="1"/>
</dbReference>
<dbReference type="Pfam" id="PF02729">
    <property type="entry name" value="OTCace_N"/>
    <property type="match status" value="1"/>
</dbReference>
<dbReference type="PRINTS" id="PR00100">
    <property type="entry name" value="AOTCASE"/>
</dbReference>
<dbReference type="PRINTS" id="PR00101">
    <property type="entry name" value="ATCASE"/>
</dbReference>
<dbReference type="SUPFAM" id="SSF53671">
    <property type="entry name" value="Aspartate/ornithine carbamoyltransferase"/>
    <property type="match status" value="1"/>
</dbReference>
<sequence>MALKHFLNTQDWTCSELNALLTQARAFKHNKLGNALKGKSIALVFFNPSMRTRSSFELGAFQLGGHAIVLQPGKDAWPIEFDTGTVMEAETEEHICEVARVLGHYVDLIGVRAFPKFLDWTYDRQDIVLNSFAKYSPVPVINMETITHPCQELAHIMALQEHFGTTDLRGKKYVLTWTYHPKPLNTAVANSALTIATRLGMDVTLLCPTPDYVLDERYIDWARQNIADTGSTFQVSHDIDNAYRGADVIYAKSWGALPFFGNWAMEKPIRDQYRHFIVDEAKMALTNNAVFSHCLPLRRNVKATDAVMDGSNCIAIHEAGNRLHVQKAIMAALASQ</sequence>
<comment type="function">
    <text evidence="1">Catalyzes the transfer of the carbamoyl group from carbamoyl phosphate to the delta-amino group of N(2)-acetyl-L-ornithine to produce N(2)-acetyl-L-citrulline. This is a step in an alternative arginine biosynthesis pathway. The enzyme has no activity with ornithine.</text>
</comment>
<comment type="catalytic activity">
    <reaction evidence="1">
        <text>N(2)-acetyl-L-ornithine + carbamoyl phosphate = N(2)-acetyl-L-citrulline + phosphate + H(+)</text>
        <dbReference type="Rhea" id="RHEA:18609"/>
        <dbReference type="ChEBI" id="CHEBI:15378"/>
        <dbReference type="ChEBI" id="CHEBI:43474"/>
        <dbReference type="ChEBI" id="CHEBI:57805"/>
        <dbReference type="ChEBI" id="CHEBI:58228"/>
        <dbReference type="ChEBI" id="CHEBI:58765"/>
        <dbReference type="EC" id="2.1.3.9"/>
    </reaction>
    <physiologicalReaction direction="left-to-right" evidence="1">
        <dbReference type="Rhea" id="RHEA:18610"/>
    </physiologicalReaction>
</comment>
<comment type="activity regulation">
    <text evidence="1">Carboxylation at Lys-302 increases the catalytic activity of the enzyme.</text>
</comment>
<comment type="pathway">
    <text evidence="1">Amino-acid biosynthesis; L-arginine biosynthesis.</text>
</comment>
<comment type="subunit">
    <text evidence="1">Homotrimer.</text>
</comment>
<comment type="subcellular location">
    <subcellularLocation>
        <location evidence="3">Cytoplasm</location>
    </subcellularLocation>
</comment>
<comment type="similarity">
    <text evidence="2 3">Belongs to the aspartate/ornithine carbamoyltransferase superfamily. AOTCase family.</text>
</comment>
<reference key="1">
    <citation type="journal article" date="2003" name="J. Bacteriol.">
        <title>Comparative analyses of the complete genome sequences of Pierce's disease and citrus variegated chlorosis strains of Xylella fastidiosa.</title>
        <authorList>
            <person name="Van Sluys M.A."/>
            <person name="de Oliveira M.C."/>
            <person name="Monteiro-Vitorello C.B."/>
            <person name="Miyaki C.Y."/>
            <person name="Furlan L.R."/>
            <person name="Camargo L.E.A."/>
            <person name="da Silva A.C.R."/>
            <person name="Moon D.H."/>
            <person name="Takita M.A."/>
            <person name="Lemos E.G.M."/>
            <person name="Machado M.A."/>
            <person name="Ferro M.I.T."/>
            <person name="da Silva F.R."/>
            <person name="Goldman M.H.S."/>
            <person name="Goldman G.H."/>
            <person name="Lemos M.V.F."/>
            <person name="El-Dorry H."/>
            <person name="Tsai S.M."/>
            <person name="Carrer H."/>
            <person name="Carraro D.M."/>
            <person name="de Oliveira R.C."/>
            <person name="Nunes L.R."/>
            <person name="Siqueira W.J."/>
            <person name="Coutinho L.L."/>
            <person name="Kimura E.T."/>
            <person name="Ferro E.S."/>
            <person name="Harakava R."/>
            <person name="Kuramae E.E."/>
            <person name="Marino C.L."/>
            <person name="Giglioti E."/>
            <person name="Abreu I.L."/>
            <person name="Alves L.M.C."/>
            <person name="do Amaral A.M."/>
            <person name="Baia G.S."/>
            <person name="Blanco S.R."/>
            <person name="Brito M.S."/>
            <person name="Cannavan F.S."/>
            <person name="Celestino A.V."/>
            <person name="da Cunha A.F."/>
            <person name="Fenille R.C."/>
            <person name="Ferro J.A."/>
            <person name="Formighieri E.F."/>
            <person name="Kishi L.T."/>
            <person name="Leoni S.G."/>
            <person name="Oliveira A.R."/>
            <person name="Rosa V.E. Jr."/>
            <person name="Sassaki F.T."/>
            <person name="Sena J.A.D."/>
            <person name="de Souza A.A."/>
            <person name="Truffi D."/>
            <person name="Tsukumo F."/>
            <person name="Yanai G.M."/>
            <person name="Zaros L.G."/>
            <person name="Civerolo E.L."/>
            <person name="Simpson A.J.G."/>
            <person name="Almeida N.F. Jr."/>
            <person name="Setubal J.C."/>
            <person name="Kitajima J.P."/>
        </authorList>
    </citation>
    <scope>NUCLEOTIDE SEQUENCE [LARGE SCALE GENOMIC DNA]</scope>
    <source>
        <strain>Temecula1 / ATCC 700964</strain>
    </source>
</reference>
<accession>Q87EL4</accession>
<evidence type="ECO:0000250" key="1">
    <source>
        <dbReference type="UniProtKB" id="Q8P8J2"/>
    </source>
</evidence>
<evidence type="ECO:0000255" key="2">
    <source>
        <dbReference type="HAMAP-Rule" id="MF_02234"/>
    </source>
</evidence>
<evidence type="ECO:0000305" key="3"/>